<reference key="1">
    <citation type="journal article" date="1990" name="J. Biol. Chem.">
        <title>Organization and expression of the Drosophila Phe-Met-Arg-Phe-NH2 neuropeptide gene.</title>
        <authorList>
            <person name="Schneider L.E."/>
            <person name="Taghert P.H."/>
        </authorList>
    </citation>
    <scope>NUCLEOTIDE SEQUENCE [GENOMIC DNA]</scope>
</reference>
<reference key="2">
    <citation type="journal article" date="1988" name="Proc. Natl. Acad. Sci. U.S.A.">
        <title>Isolation and characterization of a Drosophila gene that encodes multiple neuropeptides related to Phe-Met-Arg-Phe-NH2 (FMRFamide).</title>
        <authorList>
            <person name="Schneider L.E."/>
            <person name="Taghert P.H."/>
        </authorList>
    </citation>
    <scope>NUCLEOTIDE SEQUENCE [MRNA]</scope>
    <source>
        <strain>Canton-S</strain>
        <tissue>Head</tissue>
    </source>
</reference>
<reference key="3">
    <citation type="journal article" date="1990" name="DNA Cell Biol.">
        <title>Organization and expression of the Drosophila FMRFamide-related prohormone gene.</title>
        <authorList>
            <person name="Chin A.C."/>
            <person name="Reynolds E.R."/>
            <person name="Scheller R.H."/>
        </authorList>
    </citation>
    <scope>NUCLEOTIDE SEQUENCE [GENOMIC DNA]</scope>
    <source>
        <tissue>Brain</tissue>
    </source>
</reference>
<reference key="4">
    <citation type="journal article" date="1988" name="Neuron">
        <title>Isolation and characterization of a Drosophila neuropeptide gene.</title>
        <authorList>
            <person name="Nambu J.R."/>
            <person name="Murphy-Erdosh C."/>
            <person name="Andrews P.C."/>
            <person name="Feistner G.J."/>
            <person name="Scheller R.H."/>
        </authorList>
    </citation>
    <scope>NUCLEOTIDE SEQUENCE [MRNA]</scope>
    <scope>AMIDATION AT PHE-157; PHE-168; PHE-179; PHE-190 AND PHE-201</scope>
</reference>
<reference key="5">
    <citation type="journal article" date="2000" name="Science">
        <title>The genome sequence of Drosophila melanogaster.</title>
        <authorList>
            <person name="Adams M.D."/>
            <person name="Celniker S.E."/>
            <person name="Holt R.A."/>
            <person name="Evans C.A."/>
            <person name="Gocayne J.D."/>
            <person name="Amanatides P.G."/>
            <person name="Scherer S.E."/>
            <person name="Li P.W."/>
            <person name="Hoskins R.A."/>
            <person name="Galle R.F."/>
            <person name="George R.A."/>
            <person name="Lewis S.E."/>
            <person name="Richards S."/>
            <person name="Ashburner M."/>
            <person name="Henderson S.N."/>
            <person name="Sutton G.G."/>
            <person name="Wortman J.R."/>
            <person name="Yandell M.D."/>
            <person name="Zhang Q."/>
            <person name="Chen L.X."/>
            <person name="Brandon R.C."/>
            <person name="Rogers Y.-H.C."/>
            <person name="Blazej R.G."/>
            <person name="Champe M."/>
            <person name="Pfeiffer B.D."/>
            <person name="Wan K.H."/>
            <person name="Doyle C."/>
            <person name="Baxter E.G."/>
            <person name="Helt G."/>
            <person name="Nelson C.R."/>
            <person name="Miklos G.L.G."/>
            <person name="Abril J.F."/>
            <person name="Agbayani A."/>
            <person name="An H.-J."/>
            <person name="Andrews-Pfannkoch C."/>
            <person name="Baldwin D."/>
            <person name="Ballew R.M."/>
            <person name="Basu A."/>
            <person name="Baxendale J."/>
            <person name="Bayraktaroglu L."/>
            <person name="Beasley E.M."/>
            <person name="Beeson K.Y."/>
            <person name="Benos P.V."/>
            <person name="Berman B.P."/>
            <person name="Bhandari D."/>
            <person name="Bolshakov S."/>
            <person name="Borkova D."/>
            <person name="Botchan M.R."/>
            <person name="Bouck J."/>
            <person name="Brokstein P."/>
            <person name="Brottier P."/>
            <person name="Burtis K.C."/>
            <person name="Busam D.A."/>
            <person name="Butler H."/>
            <person name="Cadieu E."/>
            <person name="Center A."/>
            <person name="Chandra I."/>
            <person name="Cherry J.M."/>
            <person name="Cawley S."/>
            <person name="Dahlke C."/>
            <person name="Davenport L.B."/>
            <person name="Davies P."/>
            <person name="de Pablos B."/>
            <person name="Delcher A."/>
            <person name="Deng Z."/>
            <person name="Mays A.D."/>
            <person name="Dew I."/>
            <person name="Dietz S.M."/>
            <person name="Dodson K."/>
            <person name="Doup L.E."/>
            <person name="Downes M."/>
            <person name="Dugan-Rocha S."/>
            <person name="Dunkov B.C."/>
            <person name="Dunn P."/>
            <person name="Durbin K.J."/>
            <person name="Evangelista C.C."/>
            <person name="Ferraz C."/>
            <person name="Ferriera S."/>
            <person name="Fleischmann W."/>
            <person name="Fosler C."/>
            <person name="Gabrielian A.E."/>
            <person name="Garg N.S."/>
            <person name="Gelbart W.M."/>
            <person name="Glasser K."/>
            <person name="Glodek A."/>
            <person name="Gong F."/>
            <person name="Gorrell J.H."/>
            <person name="Gu Z."/>
            <person name="Guan P."/>
            <person name="Harris M."/>
            <person name="Harris N.L."/>
            <person name="Harvey D.A."/>
            <person name="Heiman T.J."/>
            <person name="Hernandez J.R."/>
            <person name="Houck J."/>
            <person name="Hostin D."/>
            <person name="Houston K.A."/>
            <person name="Howland T.J."/>
            <person name="Wei M.-H."/>
            <person name="Ibegwam C."/>
            <person name="Jalali M."/>
            <person name="Kalush F."/>
            <person name="Karpen G.H."/>
            <person name="Ke Z."/>
            <person name="Kennison J.A."/>
            <person name="Ketchum K.A."/>
            <person name="Kimmel B.E."/>
            <person name="Kodira C.D."/>
            <person name="Kraft C.L."/>
            <person name="Kravitz S."/>
            <person name="Kulp D."/>
            <person name="Lai Z."/>
            <person name="Lasko P."/>
            <person name="Lei Y."/>
            <person name="Levitsky A.A."/>
            <person name="Li J.H."/>
            <person name="Li Z."/>
            <person name="Liang Y."/>
            <person name="Lin X."/>
            <person name="Liu X."/>
            <person name="Mattei B."/>
            <person name="McIntosh T.C."/>
            <person name="McLeod M.P."/>
            <person name="McPherson D."/>
            <person name="Merkulov G."/>
            <person name="Milshina N.V."/>
            <person name="Mobarry C."/>
            <person name="Morris J."/>
            <person name="Moshrefi A."/>
            <person name="Mount S.M."/>
            <person name="Moy M."/>
            <person name="Murphy B."/>
            <person name="Murphy L."/>
            <person name="Muzny D.M."/>
            <person name="Nelson D.L."/>
            <person name="Nelson D.R."/>
            <person name="Nelson K.A."/>
            <person name="Nixon K."/>
            <person name="Nusskern D.R."/>
            <person name="Pacleb J.M."/>
            <person name="Palazzolo M."/>
            <person name="Pittman G.S."/>
            <person name="Pan S."/>
            <person name="Pollard J."/>
            <person name="Puri V."/>
            <person name="Reese M.G."/>
            <person name="Reinert K."/>
            <person name="Remington K."/>
            <person name="Saunders R.D.C."/>
            <person name="Scheeler F."/>
            <person name="Shen H."/>
            <person name="Shue B.C."/>
            <person name="Siden-Kiamos I."/>
            <person name="Simpson M."/>
            <person name="Skupski M.P."/>
            <person name="Smith T.J."/>
            <person name="Spier E."/>
            <person name="Spradling A.C."/>
            <person name="Stapleton M."/>
            <person name="Strong R."/>
            <person name="Sun E."/>
            <person name="Svirskas R."/>
            <person name="Tector C."/>
            <person name="Turner R."/>
            <person name="Venter E."/>
            <person name="Wang A.H."/>
            <person name="Wang X."/>
            <person name="Wang Z.-Y."/>
            <person name="Wassarman D.A."/>
            <person name="Weinstock G.M."/>
            <person name="Weissenbach J."/>
            <person name="Williams S.M."/>
            <person name="Woodage T."/>
            <person name="Worley K.C."/>
            <person name="Wu D."/>
            <person name="Yang S."/>
            <person name="Yao Q.A."/>
            <person name="Ye J."/>
            <person name="Yeh R.-F."/>
            <person name="Zaveri J.S."/>
            <person name="Zhan M."/>
            <person name="Zhang G."/>
            <person name="Zhao Q."/>
            <person name="Zheng L."/>
            <person name="Zheng X.H."/>
            <person name="Zhong F.N."/>
            <person name="Zhong W."/>
            <person name="Zhou X."/>
            <person name="Zhu S.C."/>
            <person name="Zhu X."/>
            <person name="Smith H.O."/>
            <person name="Gibbs R.A."/>
            <person name="Myers E.W."/>
            <person name="Rubin G.M."/>
            <person name="Venter J.C."/>
        </authorList>
    </citation>
    <scope>NUCLEOTIDE SEQUENCE [LARGE SCALE GENOMIC DNA]</scope>
    <source>
        <strain>Berkeley</strain>
    </source>
</reference>
<reference key="6">
    <citation type="journal article" date="2002" name="Genome Biol.">
        <title>Annotation of the Drosophila melanogaster euchromatic genome: a systematic review.</title>
        <authorList>
            <person name="Misra S."/>
            <person name="Crosby M.A."/>
            <person name="Mungall C.J."/>
            <person name="Matthews B.B."/>
            <person name="Campbell K.S."/>
            <person name="Hradecky P."/>
            <person name="Huang Y."/>
            <person name="Kaminker J.S."/>
            <person name="Millburn G.H."/>
            <person name="Prochnik S.E."/>
            <person name="Smith C.D."/>
            <person name="Tupy J.L."/>
            <person name="Whitfield E.J."/>
            <person name="Bayraktaroglu L."/>
            <person name="Berman B.P."/>
            <person name="Bettencourt B.R."/>
            <person name="Celniker S.E."/>
            <person name="de Grey A.D.N.J."/>
            <person name="Drysdale R.A."/>
            <person name="Harris N.L."/>
            <person name="Richter J."/>
            <person name="Russo S."/>
            <person name="Schroeder A.J."/>
            <person name="Shu S.Q."/>
            <person name="Stapleton M."/>
            <person name="Yamada C."/>
            <person name="Ashburner M."/>
            <person name="Gelbart W.M."/>
            <person name="Rubin G.M."/>
            <person name="Lewis S.E."/>
        </authorList>
    </citation>
    <scope>GENOME REANNOTATION</scope>
    <source>
        <strain>Berkeley</strain>
    </source>
</reference>
<reference key="7">
    <citation type="journal article" date="2002" name="Genome Biol.">
        <title>A Drosophila full-length cDNA resource.</title>
        <authorList>
            <person name="Stapleton M."/>
            <person name="Carlson J.W."/>
            <person name="Brokstein P."/>
            <person name="Yu C."/>
            <person name="Champe M."/>
            <person name="George R.A."/>
            <person name="Guarin H."/>
            <person name="Kronmiller B."/>
            <person name="Pacleb J.M."/>
            <person name="Park S."/>
            <person name="Wan K.H."/>
            <person name="Rubin G.M."/>
            <person name="Celniker S.E."/>
        </authorList>
    </citation>
    <scope>NUCLEOTIDE SEQUENCE [LARGE SCALE MRNA]</scope>
    <source>
        <strain>Berkeley</strain>
        <tissue>Head</tissue>
    </source>
</reference>
<reference key="8">
    <citation type="journal article" date="1992" name="J. Mol. Neurosci.">
        <title>Isolation and structural characterization of Drosophila TDVDHVFLRFamide and FMRFamide-containing neural peptides.</title>
        <authorList>
            <person name="Nichols R."/>
        </authorList>
    </citation>
    <scope>PARTIAL PROTEIN SEQUENCE (DPKQDFMRF-AMIDE; TPAEDFMRF-AMIDE AND SDNFMRF-AMIDE)</scope>
</reference>
<reference key="9">
    <citation type="journal article" date="2002" name="J. Biol. Chem.">
        <title>Peptidomics of the larval Drosophila melanogaster central nervous system.</title>
        <authorList>
            <person name="Baggerman G."/>
            <person name="Cerstiaens A."/>
            <person name="De Loof A."/>
            <person name="Schoofs L."/>
        </authorList>
    </citation>
    <scope>PROTEIN SEQUENCE OF 149-157; 160-168; 171-179; 182-190; 193-201; 204-212; 215-223; 226-232 AND 253-259</scope>
    <scope>AMIDATION AT PHE-114; TYR-146; PHE-157; PHE-168; PHE-179; PHE-190; PHE-201; PHE-212; PHE-223; PHE-232; PHE-250; PHE-259; SER-270 AND PHE-280</scope>
    <source>
        <tissue>Larva</tissue>
    </source>
</reference>
<keyword id="KW-0027">Amidation</keyword>
<keyword id="KW-0165">Cleavage on pair of basic residues</keyword>
<keyword id="KW-0903">Direct protein sequencing</keyword>
<keyword id="KW-0527">Neuropeptide</keyword>
<keyword id="KW-1185">Reference proteome</keyword>
<keyword id="KW-0677">Repeat</keyword>
<keyword id="KW-0964">Secreted</keyword>
<keyword id="KW-0732">Signal</keyword>
<proteinExistence type="evidence at protein level"/>
<dbReference type="EMBL" id="M32641">
    <property type="protein sequence ID" value="AAA28537.1"/>
    <property type="molecule type" value="Genomic_DNA"/>
</dbReference>
<dbReference type="EMBL" id="J03232">
    <property type="protein sequence ID" value="AAA28536.1"/>
    <property type="molecule type" value="mRNA"/>
</dbReference>
<dbReference type="EMBL" id="M37711">
    <property type="protein sequence ID" value="AAA28538.1"/>
    <property type="molecule type" value="Genomic_DNA"/>
</dbReference>
<dbReference type="EMBL" id="X53301">
    <property type="protein sequence ID" value="CAA37389.1"/>
    <property type="molecule type" value="mRNA"/>
</dbReference>
<dbReference type="EMBL" id="X76204">
    <property type="protein sequence ID" value="CAA53798.1"/>
    <property type="molecule type" value="mRNA"/>
</dbReference>
<dbReference type="EMBL" id="AE013599">
    <property type="protein sequence ID" value="AAF58874.1"/>
    <property type="molecule type" value="Genomic_DNA"/>
</dbReference>
<dbReference type="EMBL" id="AY070639">
    <property type="protein sequence ID" value="AAL48110.1"/>
    <property type="molecule type" value="mRNA"/>
</dbReference>
<dbReference type="PIR" id="A34616">
    <property type="entry name" value="A34616"/>
</dbReference>
<dbReference type="RefSeq" id="NP_523669.2">
    <property type="nucleotide sequence ID" value="NM_078945.4"/>
</dbReference>
<dbReference type="BioGRID" id="61858">
    <property type="interactions" value="2"/>
</dbReference>
<dbReference type="FunCoup" id="P10552">
    <property type="interactions" value="89"/>
</dbReference>
<dbReference type="STRING" id="7227.FBpp0087471"/>
<dbReference type="PaxDb" id="7227-FBpp0087471"/>
<dbReference type="DNASU" id="36030"/>
<dbReference type="EnsemblMetazoa" id="FBtr0088383">
    <property type="protein sequence ID" value="FBpp0087471"/>
    <property type="gene ID" value="FBgn0000715"/>
</dbReference>
<dbReference type="GeneID" id="36030"/>
<dbReference type="KEGG" id="dme:Dmel_CG2346"/>
<dbReference type="AGR" id="FB:FBgn0000715"/>
<dbReference type="CTD" id="36030"/>
<dbReference type="FlyBase" id="FBgn0000715">
    <property type="gene designation" value="FMRFa"/>
</dbReference>
<dbReference type="VEuPathDB" id="VectorBase:FBgn0000715"/>
<dbReference type="eggNOG" id="ENOG502SDD0">
    <property type="taxonomic scope" value="Eukaryota"/>
</dbReference>
<dbReference type="HOGENOM" id="CLU_045740_0_0_1"/>
<dbReference type="InParanoid" id="P10552"/>
<dbReference type="OrthoDB" id="5813613at2759"/>
<dbReference type="PhylomeDB" id="P10552"/>
<dbReference type="BioGRID-ORCS" id="36030">
    <property type="hits" value="0 hits in 1 CRISPR screen"/>
</dbReference>
<dbReference type="GenomeRNAi" id="36030"/>
<dbReference type="PRO" id="PR:P10552"/>
<dbReference type="Proteomes" id="UP000000803">
    <property type="component" value="Chromosome 2R"/>
</dbReference>
<dbReference type="Bgee" id="FBgn0000715">
    <property type="expression patterns" value="Expressed in proximal medullary amacrine neuron (Drosophila) in brain and 18 other cell types or tissues"/>
</dbReference>
<dbReference type="GO" id="GO:0005615">
    <property type="term" value="C:extracellular space"/>
    <property type="evidence" value="ECO:0000314"/>
    <property type="project" value="FlyBase"/>
</dbReference>
<dbReference type="GO" id="GO:0071855">
    <property type="term" value="F:neuropeptide receptor binding"/>
    <property type="evidence" value="ECO:0000353"/>
    <property type="project" value="FlyBase"/>
</dbReference>
<dbReference type="GO" id="GO:0048018">
    <property type="term" value="F:receptor ligand activity"/>
    <property type="evidence" value="ECO:0000314"/>
    <property type="project" value="FlyBase"/>
</dbReference>
<dbReference type="GO" id="GO:0008344">
    <property type="term" value="P:adult locomotory behavior"/>
    <property type="evidence" value="ECO:0000315"/>
    <property type="project" value="FlyBase"/>
</dbReference>
<dbReference type="GO" id="GO:0002209">
    <property type="term" value="P:behavioral defense response"/>
    <property type="evidence" value="ECO:0000314"/>
    <property type="project" value="FlyBase"/>
</dbReference>
<dbReference type="GO" id="GO:0008345">
    <property type="term" value="P:larval locomotory behavior"/>
    <property type="evidence" value="ECO:0000314"/>
    <property type="project" value="FlyBase"/>
</dbReference>
<dbReference type="GO" id="GO:0045822">
    <property type="term" value="P:negative regulation of heart contraction"/>
    <property type="evidence" value="ECO:0000314"/>
    <property type="project" value="FlyBase"/>
</dbReference>
<dbReference type="GO" id="GO:0010459">
    <property type="term" value="P:negative regulation of heart rate"/>
    <property type="evidence" value="ECO:0000314"/>
    <property type="project" value="FlyBase"/>
</dbReference>
<dbReference type="GO" id="GO:0007218">
    <property type="term" value="P:neuropeptide signaling pathway"/>
    <property type="evidence" value="ECO:0000314"/>
    <property type="project" value="FlyBase"/>
</dbReference>
<dbReference type="GO" id="GO:0007204">
    <property type="term" value="P:positive regulation of cytosolic calcium ion concentration"/>
    <property type="evidence" value="ECO:0000314"/>
    <property type="project" value="FlyBase"/>
</dbReference>
<dbReference type="GO" id="GO:1900075">
    <property type="term" value="P:positive regulation of neuromuscular synaptic transmission"/>
    <property type="evidence" value="ECO:0000314"/>
    <property type="project" value="FlyBase"/>
</dbReference>
<dbReference type="GO" id="GO:0006942">
    <property type="term" value="P:regulation of striated muscle contraction"/>
    <property type="evidence" value="ECO:0000314"/>
    <property type="project" value="FlyBase"/>
</dbReference>
<dbReference type="InterPro" id="IPR002544">
    <property type="entry name" value="FMRFamid-related_peptide-like"/>
</dbReference>
<dbReference type="InterPro" id="IPR051041">
    <property type="entry name" value="FMRFamide-related_np"/>
</dbReference>
<dbReference type="PANTHER" id="PTHR20986">
    <property type="entry name" value="FMRFAMIDE-RELATED PEPTIDES"/>
    <property type="match status" value="1"/>
</dbReference>
<dbReference type="PANTHER" id="PTHR20986:SF22">
    <property type="entry name" value="FMRFAMIDE-RELATED PEPTIDES"/>
    <property type="match status" value="1"/>
</dbReference>
<dbReference type="Pfam" id="PF01581">
    <property type="entry name" value="FARP"/>
    <property type="match status" value="10"/>
</dbReference>
<protein>
    <recommendedName>
        <fullName>FMRFamide-related peptides</fullName>
    </recommendedName>
    <component>
        <recommendedName>
            <fullName>FMRFamide A</fullName>
        </recommendedName>
    </component>
    <component>
        <recommendedName>
            <fullName>Corticotropin-releasing factor-like</fullName>
        </recommendedName>
    </component>
    <component>
        <recommendedName>
            <fullName>AAMDRY-amide</fullName>
        </recommendedName>
    </component>
    <component>
        <recommendedName>
            <fullName>DPKQDFMRF-amide</fullName>
        </recommendedName>
    </component>
    <component>
        <recommendedName>
            <fullName>TPAEDFMRF-amide</fullName>
        </recommendedName>
    </component>
    <component>
        <recommendedName>
            <fullName>SDNFMRF-amide</fullName>
        </recommendedName>
    </component>
    <component>
        <recommendedName>
            <fullName>SPKQDFMRF-amide</fullName>
        </recommendedName>
    </component>
    <component>
        <recommendedName>
            <fullName>PDNFMRF-amide</fullName>
        </recommendedName>
    </component>
    <component>
        <recommendedName>
            <fullName>SAPQDFVRS-amide</fullName>
        </recommendedName>
    </component>
    <component>
        <recommendedName>
            <fullName>MDSNFIRF-amide</fullName>
        </recommendedName>
    </component>
</protein>
<comment type="function">
    <text>In insects, FMRFamide and related peptides have modulatory actions at skeletal neuromuscular junctions, and peptides that are immunologically related to FMRFamide are released into the circulation from neurohemal organs.</text>
</comment>
<comment type="subcellular location">
    <subcellularLocation>
        <location>Secreted</location>
    </subcellularLocation>
</comment>
<comment type="PTM">
    <text>This precursor includes 13 peptides that have FMRF or related sequences at their C-termini, and other putative neuropeptides.</text>
</comment>
<comment type="similarity">
    <text evidence="5">Belongs to the FARP (FMRFamide related peptide) family.</text>
</comment>
<evidence type="ECO:0000255" key="1"/>
<evidence type="ECO:0000256" key="2">
    <source>
        <dbReference type="SAM" id="MobiDB-lite"/>
    </source>
</evidence>
<evidence type="ECO:0000269" key="3">
    <source>
    </source>
</evidence>
<evidence type="ECO:0000269" key="4">
    <source>
    </source>
</evidence>
<evidence type="ECO:0000305" key="5"/>
<evidence type="ECO:0000312" key="6">
    <source>
        <dbReference type="FlyBase" id="FBgn0000715"/>
    </source>
</evidence>
<name>FMRF_DROME</name>
<accession>P10552</accession>
<accession>Q9V5D8</accession>
<feature type="signal peptide" evidence="1">
    <location>
        <begin position="1"/>
        <end position="22"/>
    </location>
</feature>
<feature type="propeptide" id="PRO_0000009721">
    <location>
        <begin position="23"/>
        <end position="102"/>
    </location>
</feature>
<feature type="peptide" id="PRO_0000009722" description="FMRFamide A">
    <location>
        <begin position="106"/>
        <end position="114"/>
    </location>
</feature>
<feature type="peptide" id="PRO_0000009723" description="Corticotropin-releasing factor-like">
    <location>
        <begin position="118"/>
        <end position="138"/>
    </location>
</feature>
<feature type="peptide" id="PRO_0000009724" description="AAMDRY-amide">
    <location>
        <begin position="141"/>
        <end position="146"/>
    </location>
</feature>
<feature type="peptide" id="PRO_0000009725" description="DPKQDFMRF-amide" evidence="4">
    <location>
        <begin position="149"/>
        <end position="157"/>
    </location>
</feature>
<feature type="peptide" id="PRO_0000009726" description="DPKQDFMRF-amide" evidence="4">
    <location>
        <begin position="160"/>
        <end position="168"/>
    </location>
</feature>
<feature type="peptide" id="PRO_0000009727" description="DPKQDFMRF-amide" evidence="4">
    <location>
        <begin position="171"/>
        <end position="179"/>
    </location>
</feature>
<feature type="peptide" id="PRO_0000009728" description="DPKQDFMRF-amide" evidence="4">
    <location>
        <begin position="182"/>
        <end position="190"/>
    </location>
</feature>
<feature type="peptide" id="PRO_0000009729" description="DPKQDFMRF-amide" evidence="4">
    <location>
        <begin position="193"/>
        <end position="201"/>
    </location>
</feature>
<feature type="peptide" id="PRO_0000009730" description="TPAEDFMRF-amide">
    <location>
        <begin position="204"/>
        <end position="212"/>
    </location>
</feature>
<feature type="peptide" id="PRO_0000009731" description="TPAEDFMRF-amide">
    <location>
        <begin position="215"/>
        <end position="223"/>
    </location>
</feature>
<feature type="peptide" id="PRO_0000009732" description="SDNFMRF-amide">
    <location>
        <begin position="226"/>
        <end position="232"/>
    </location>
</feature>
<feature type="propeptide" id="PRO_0000009733">
    <location>
        <begin position="235"/>
        <end position="240"/>
    </location>
</feature>
<feature type="peptide" id="PRO_0000009734" description="SPKQDFMRF-amide">
    <location>
        <begin position="242"/>
        <end position="250"/>
    </location>
</feature>
<feature type="peptide" id="PRO_0000009735" description="PDNFMRF-amide">
    <location>
        <begin position="253"/>
        <end position="259"/>
    </location>
</feature>
<feature type="peptide" id="PRO_0000009736" description="SAPQDFVRS-amide">
    <location>
        <begin position="262"/>
        <end position="270"/>
    </location>
</feature>
<feature type="peptide" id="PRO_0000009737" description="MDSNFIRF-amide">
    <location>
        <begin position="273"/>
        <end position="280"/>
    </location>
</feature>
<feature type="propeptide" id="PRO_0000009738">
    <location>
        <begin position="283"/>
        <end position="347"/>
    </location>
</feature>
<feature type="region of interest" description="Disordered" evidence="2">
    <location>
        <begin position="283"/>
        <end position="347"/>
    </location>
</feature>
<feature type="compositionally biased region" description="Basic and acidic residues" evidence="2">
    <location>
        <begin position="305"/>
        <end position="320"/>
    </location>
</feature>
<feature type="compositionally biased region" description="Polar residues" evidence="2">
    <location>
        <begin position="321"/>
        <end position="347"/>
    </location>
</feature>
<feature type="modified residue" description="Phenylalanine amide" evidence="3">
    <location>
        <position position="114"/>
    </location>
</feature>
<feature type="modified residue" description="Tyrosine amide" evidence="3">
    <location>
        <position position="146"/>
    </location>
</feature>
<feature type="modified residue" description="Phenylalanine amide" evidence="3 4">
    <location>
        <position position="157"/>
    </location>
</feature>
<feature type="modified residue" description="Phenylalanine amide" evidence="3 4">
    <location>
        <position position="168"/>
    </location>
</feature>
<feature type="modified residue" description="Phenylalanine amide" evidence="3 4">
    <location>
        <position position="179"/>
    </location>
</feature>
<feature type="modified residue" description="Phenylalanine amide" evidence="3 4">
    <location>
        <position position="190"/>
    </location>
</feature>
<feature type="modified residue" description="Phenylalanine amide" evidence="3 4">
    <location>
        <position position="201"/>
    </location>
</feature>
<feature type="modified residue" description="Phenylalanine amide" evidence="3">
    <location>
        <position position="212"/>
    </location>
</feature>
<feature type="modified residue" description="Phenylalanine amide" evidence="3">
    <location>
        <position position="223"/>
    </location>
</feature>
<feature type="modified residue" description="Phenylalanine amide" evidence="3">
    <location>
        <position position="232"/>
    </location>
</feature>
<feature type="modified residue" description="Phenylalanine amide" evidence="3">
    <location>
        <position position="250"/>
    </location>
</feature>
<feature type="modified residue" description="Phenylalanine amide" evidence="3">
    <location>
        <position position="259"/>
    </location>
</feature>
<feature type="modified residue" description="Serine amide" evidence="3">
    <location>
        <position position="270"/>
    </location>
</feature>
<feature type="modified residue" description="Phenylalanine amide" evidence="3">
    <location>
        <position position="280"/>
    </location>
</feature>
<feature type="sequence conflict" description="In Ref. 2; AAA28536." evidence="5" ref="2">
    <original>A</original>
    <variation>T</variation>
    <location>
        <position position="36"/>
    </location>
</feature>
<feature type="sequence conflict" description="In Ref. 3; AAA28538/CAA37389." evidence="5" ref="3">
    <original>E</original>
    <variation>Q</variation>
    <location>
        <position position="39"/>
    </location>
</feature>
<feature type="sequence conflict" description="In Ref. 5; AAF58874 and 7; AAL48110." evidence="5" ref="5 7">
    <original>S</original>
    <variation>P</variation>
    <location>
        <position position="43"/>
    </location>
</feature>
<feature type="sequence conflict" description="In Ref. 4; CAA53798." evidence="5" ref="4">
    <original>EL</original>
    <variation>DV</variation>
    <location>
        <begin position="62"/>
        <end position="63"/>
    </location>
</feature>
<feature type="sequence conflict" description="In Ref. 1; AAA28537, 5; AAF58874 and 7; AAL48110." evidence="5" ref="1 5 7">
    <original>G</original>
    <variation>E</variation>
    <location>
        <position position="130"/>
    </location>
</feature>
<feature type="sequence conflict" description="In Ref. 3; AAA28538/CAA37389." evidence="5" ref="3">
    <original>E</original>
    <variation>A</variation>
    <location>
        <position position="207"/>
    </location>
</feature>
<feature type="sequence conflict" description="In Ref. 3; AAA28538/CAA37389 and 4; CAA53798." evidence="5" ref="3 4">
    <original>EL</original>
    <variation>DV</variation>
    <location>
        <begin position="239"/>
        <end position="240"/>
    </location>
</feature>
<feature type="sequence conflict" description="In Ref. 3; AAA28538/CAA37389 and 4; CAA53798." evidence="5" ref="3 4">
    <original>A</original>
    <variation>R</variation>
    <location>
        <position position="263"/>
    </location>
</feature>
<organism>
    <name type="scientific">Drosophila melanogaster</name>
    <name type="common">Fruit fly</name>
    <dbReference type="NCBI Taxonomy" id="7227"/>
    <lineage>
        <taxon>Eukaryota</taxon>
        <taxon>Metazoa</taxon>
        <taxon>Ecdysozoa</taxon>
        <taxon>Arthropoda</taxon>
        <taxon>Hexapoda</taxon>
        <taxon>Insecta</taxon>
        <taxon>Pterygota</taxon>
        <taxon>Neoptera</taxon>
        <taxon>Endopterygota</taxon>
        <taxon>Diptera</taxon>
        <taxon>Brachycera</taxon>
        <taxon>Muscomorpha</taxon>
        <taxon>Ephydroidea</taxon>
        <taxon>Drosophilidae</taxon>
        <taxon>Drosophila</taxon>
        <taxon>Sophophora</taxon>
    </lineage>
</organism>
<sequence>MGIALMFLLALYQMQSAIHSEIIDTPNYAGNSLQDADSEVSPSQDNDLVDALLGNDQTERAELEFRHPISVIGIDYSKNAVVLHFQKHGRKPRYKYDPELEAKRRSVQDNFMHFGKRQAEQLPPEGSYAGSDELEGMAKRAAMDRYGRDPKQDFMRFGRDPKQDFMRFGRDPKQDFMRFGRDPKQDFMRFGRDPKQDFMRFGRTPAEDFMRFGRTPAEDFMRFGRSDNFMRFGRSPHEELRSPKQDFMRFGRPDNFMRFGRSAPQDFVRSGKMDSNFIRFGKSLKPAAPESKPVKSNQGNPGERSPVDKAMTELFKKQELQDQQVKNGAQATTTQDGSVEQDQFFGQ</sequence>
<gene>
    <name evidence="6" type="primary">FMRFa</name>
    <name evidence="6" type="synonym">Fmrf</name>
    <name evidence="6" type="ORF">CG2346</name>
</gene>